<keyword id="KW-0119">Carbohydrate metabolism</keyword>
<keyword id="KW-0963">Cytoplasm</keyword>
<keyword id="KW-0413">Isomerase</keyword>
<keyword id="KW-1185">Reference proteome</keyword>
<keyword id="KW-0684">Rhamnose metabolism</keyword>
<sequence length="106" mass="12240">MTGERYAFRMKLNPGMEAEYRRRHDEIWPELVDLLHETGVSDYAIYLDEETSTLFGVLTRKPNHGMAALPDHPVMKKWWAHMADIMATNADNSPVSVDLKPVFHMP</sequence>
<gene>
    <name evidence="1" type="primary">rhaM</name>
    <name type="ordered locus">Oant_3566</name>
</gene>
<organism>
    <name type="scientific">Brucella anthropi (strain ATCC 49188 / DSM 6882 / CCUG 24695 / JCM 21032 / LMG 3331 / NBRC 15819 / NCTC 12168 / Alc 37)</name>
    <name type="common">Ochrobactrum anthropi</name>
    <dbReference type="NCBI Taxonomy" id="439375"/>
    <lineage>
        <taxon>Bacteria</taxon>
        <taxon>Pseudomonadati</taxon>
        <taxon>Pseudomonadota</taxon>
        <taxon>Alphaproteobacteria</taxon>
        <taxon>Hyphomicrobiales</taxon>
        <taxon>Brucellaceae</taxon>
        <taxon>Brucella/Ochrobactrum group</taxon>
        <taxon>Brucella</taxon>
    </lineage>
</organism>
<proteinExistence type="inferred from homology"/>
<comment type="function">
    <text evidence="1">Involved in the anomeric conversion of L-rhamnose.</text>
</comment>
<comment type="catalytic activity">
    <reaction evidence="1">
        <text>alpha-L-rhamnose = beta-L-rhamnose</text>
        <dbReference type="Rhea" id="RHEA:25584"/>
        <dbReference type="ChEBI" id="CHEBI:27586"/>
        <dbReference type="ChEBI" id="CHEBI:27907"/>
        <dbReference type="EC" id="5.1.3.32"/>
    </reaction>
</comment>
<comment type="pathway">
    <text evidence="1">Carbohydrate metabolism; L-rhamnose metabolism.</text>
</comment>
<comment type="subunit">
    <text evidence="1">Homodimer.</text>
</comment>
<comment type="subcellular location">
    <subcellularLocation>
        <location evidence="1">Cytoplasm</location>
    </subcellularLocation>
</comment>
<comment type="similarity">
    <text evidence="1">Belongs to the rhamnose mutarotase family.</text>
</comment>
<reference key="1">
    <citation type="journal article" date="2011" name="J. Bacteriol.">
        <title>Genome of Ochrobactrum anthropi ATCC 49188 T, a versatile opportunistic pathogen and symbiont of several eukaryotic hosts.</title>
        <authorList>
            <person name="Chain P.S."/>
            <person name="Lang D.M."/>
            <person name="Comerci D.J."/>
            <person name="Malfatti S.A."/>
            <person name="Vergez L.M."/>
            <person name="Shin M."/>
            <person name="Ugalde R.A."/>
            <person name="Garcia E."/>
            <person name="Tolmasky M.E."/>
        </authorList>
    </citation>
    <scope>NUCLEOTIDE SEQUENCE [LARGE SCALE GENOMIC DNA]</scope>
    <source>
        <strain>ATCC 49188 / DSM 6882 / CCUG 24695 / JCM 21032 / LMG 3331 / NBRC 15819 / NCTC 12168 / Alc 37</strain>
    </source>
</reference>
<protein>
    <recommendedName>
        <fullName evidence="1">L-rhamnose mutarotase</fullName>
        <ecNumber evidence="1">5.1.3.32</ecNumber>
    </recommendedName>
    <alternativeName>
        <fullName evidence="1">Rhamnose 1-epimerase</fullName>
    </alternativeName>
    <alternativeName>
        <fullName evidence="1">Type-3 mutarotase</fullName>
    </alternativeName>
</protein>
<accession>A6X4W8</accession>
<dbReference type="EC" id="5.1.3.32" evidence="1"/>
<dbReference type="EMBL" id="CP000759">
    <property type="protein sequence ID" value="ABS16272.1"/>
    <property type="molecule type" value="Genomic_DNA"/>
</dbReference>
<dbReference type="RefSeq" id="WP_012092962.1">
    <property type="nucleotide sequence ID" value="NC_009668.1"/>
</dbReference>
<dbReference type="SMR" id="A6X4W8"/>
<dbReference type="STRING" id="439375.Oant_3566"/>
<dbReference type="KEGG" id="oan:Oant_3566"/>
<dbReference type="PATRIC" id="fig|439375.7.peg.3726"/>
<dbReference type="eggNOG" id="COG3254">
    <property type="taxonomic scope" value="Bacteria"/>
</dbReference>
<dbReference type="HOGENOM" id="CLU_100689_2_0_5"/>
<dbReference type="PhylomeDB" id="A6X4W8"/>
<dbReference type="UniPathway" id="UPA00125"/>
<dbReference type="Proteomes" id="UP000002301">
    <property type="component" value="Chromosome 2"/>
</dbReference>
<dbReference type="GO" id="GO:0005737">
    <property type="term" value="C:cytoplasm"/>
    <property type="evidence" value="ECO:0007669"/>
    <property type="project" value="UniProtKB-SubCell"/>
</dbReference>
<dbReference type="GO" id="GO:0062192">
    <property type="term" value="F:L-rhamnose mutarotase activity"/>
    <property type="evidence" value="ECO:0007669"/>
    <property type="project" value="UniProtKB-EC"/>
</dbReference>
<dbReference type="GO" id="GO:0019301">
    <property type="term" value="P:rhamnose catabolic process"/>
    <property type="evidence" value="ECO:0007669"/>
    <property type="project" value="TreeGrafter"/>
</dbReference>
<dbReference type="Gene3D" id="3.30.70.100">
    <property type="match status" value="1"/>
</dbReference>
<dbReference type="HAMAP" id="MF_01663">
    <property type="entry name" value="L_rham_rotase"/>
    <property type="match status" value="1"/>
</dbReference>
<dbReference type="InterPro" id="IPR011008">
    <property type="entry name" value="Dimeric_a/b-barrel"/>
</dbReference>
<dbReference type="InterPro" id="IPR013448">
    <property type="entry name" value="L-rhamnose_mutarotase"/>
</dbReference>
<dbReference type="InterPro" id="IPR008000">
    <property type="entry name" value="Rham/fucose_mutarotase"/>
</dbReference>
<dbReference type="NCBIfam" id="TIGR02625">
    <property type="entry name" value="YiiL_rotase"/>
    <property type="match status" value="1"/>
</dbReference>
<dbReference type="PANTHER" id="PTHR34389">
    <property type="entry name" value="L-RHAMNOSE MUTAROTASE"/>
    <property type="match status" value="1"/>
</dbReference>
<dbReference type="PANTHER" id="PTHR34389:SF2">
    <property type="entry name" value="L-RHAMNOSE MUTAROTASE"/>
    <property type="match status" value="1"/>
</dbReference>
<dbReference type="Pfam" id="PF05336">
    <property type="entry name" value="rhaM"/>
    <property type="match status" value="1"/>
</dbReference>
<dbReference type="SUPFAM" id="SSF54909">
    <property type="entry name" value="Dimeric alpha+beta barrel"/>
    <property type="match status" value="1"/>
</dbReference>
<name>RHAM_BRUA4</name>
<evidence type="ECO:0000255" key="1">
    <source>
        <dbReference type="HAMAP-Rule" id="MF_01663"/>
    </source>
</evidence>
<feature type="chain" id="PRO_0000344590" description="L-rhamnose mutarotase">
    <location>
        <begin position="1"/>
        <end position="106"/>
    </location>
</feature>
<feature type="active site" description="Proton donor" evidence="1">
    <location>
        <position position="24"/>
    </location>
</feature>
<feature type="binding site" evidence="1">
    <location>
        <position position="20"/>
    </location>
    <ligand>
        <name>substrate</name>
    </ligand>
</feature>
<feature type="binding site" evidence="1">
    <location>
        <position position="43"/>
    </location>
    <ligand>
        <name>substrate</name>
    </ligand>
</feature>
<feature type="binding site" evidence="1">
    <location>
        <begin position="78"/>
        <end position="79"/>
    </location>
    <ligand>
        <name>substrate</name>
    </ligand>
</feature>